<sequence>MAEESKAAEYFDPLDPLSFNELRYVVNLVRKSYPEKQISFDVVTLSEPHKEEYVHWRYSSAHEGIPDRRAYVIVLEKEVPGVFEGIVNLTTGKIEKWEHSVDTCPIITADLLAITDEIVRNDANVIEQCKICGVPESGLSNVYCDPWTIGYDERYGSGRRLQQALMYYKPGDSGHLRSIPLDFCPIIDVDQKKVIAIDIPKVRRPIPQDVNSDNNLKKLEQEMEAMKMLKPLRITQPEGVNFRIKGRYIEWQNFCFHIGFNYREGIVLSDVVFNEDGHLRPLFYRISLTEMAVPFGAKGHSHHRKHAYDLGEYGVGYRTNPLSFTCGCEGVIHYMDADFVNYRGEITTIKNAISIHEEDDGVLFKYSDLRDRNANISARSIKLVVSQVFTAANYEYLVYWIFRMDGVIECEIRLTGILNTNAINEDEDLKGHGTQVYPKISAENHEHLFCLRINPMLDGLRNSVATVDALRDKNGTLVSKYIIPETVTEAISNYDSSTGRTWDICNLNKLHPYSGKPVSYKLISRDTSPVLSQPGTTNSDCSGFAENNIYVTPYMDDQIFPTGDYAPQASDDTPKGLSKWISDDPNAQIKNTDIVVWHTFGMIHFPAPEDFPIMPAESIHLFLQPRNFFKHNPALDTSSSVNSTSEATSPNTHHENLRDTSQKRESHSTPHDYEPHVSDKNDKSVEDKLHFVQKDESRPKEPVVDAAQKHEGRSETLAQPGQQNANQSEEKQGGQNGSNGGHHHHHHHHYITGHVYGGYHKHSGSGGHLVDMMKNISDVTHDFAMGNFRYHKYD</sequence>
<organism>
    <name type="scientific">Schizosaccharomyces pombe (strain 972 / ATCC 24843)</name>
    <name type="common">Fission yeast</name>
    <dbReference type="NCBI Taxonomy" id="284812"/>
    <lineage>
        <taxon>Eukaryota</taxon>
        <taxon>Fungi</taxon>
        <taxon>Dikarya</taxon>
        <taxon>Ascomycota</taxon>
        <taxon>Taphrinomycotina</taxon>
        <taxon>Schizosaccharomycetes</taxon>
        <taxon>Schizosaccharomycetales</taxon>
        <taxon>Schizosaccharomycetaceae</taxon>
        <taxon>Schizosaccharomyces</taxon>
    </lineage>
</organism>
<comment type="function">
    <text evidence="6">Copper amine oxidase-like protein that does not show any copper amine oxidase activity. May be the appropriate amine substrate for cao2 has not been identified yet.</text>
</comment>
<comment type="catalytic activity">
    <reaction evidence="2">
        <text>a primary methyl amine + O2 + H2O = an aldehyde + H2O2 + NH4(+)</text>
        <dbReference type="Rhea" id="RHEA:16153"/>
        <dbReference type="ChEBI" id="CHEBI:15377"/>
        <dbReference type="ChEBI" id="CHEBI:15379"/>
        <dbReference type="ChEBI" id="CHEBI:16240"/>
        <dbReference type="ChEBI" id="CHEBI:17478"/>
        <dbReference type="ChEBI" id="CHEBI:28938"/>
        <dbReference type="ChEBI" id="CHEBI:228804"/>
        <dbReference type="EC" id="1.4.3.21"/>
    </reaction>
</comment>
<comment type="cofactor">
    <cofactor evidence="2">
        <name>Cu cation</name>
        <dbReference type="ChEBI" id="CHEBI:23378"/>
    </cofactor>
    <cofactor evidence="1">
        <name>Zn(2+)</name>
        <dbReference type="ChEBI" id="CHEBI:29105"/>
    </cofactor>
    <text evidence="1 2">Binds 1 copper ion per subunit (By similarity). Can also use zinc ion as cofactor (By similarity).</text>
</comment>
<comment type="cofactor">
    <cofactor evidence="2">
        <name>L-topaquinone</name>
        <dbReference type="ChEBI" id="CHEBI:79027"/>
    </cofactor>
    <text evidence="2">Contains 1 topaquinone per subunit.</text>
</comment>
<comment type="cofactor">
    <cofactor evidence="3">
        <name>Mn(2+)</name>
        <dbReference type="ChEBI" id="CHEBI:29035"/>
    </cofactor>
    <text evidence="3">Binds 1 Mn(2+) ion per subunit.</text>
</comment>
<comment type="subunit">
    <text evidence="2">Homodimer.</text>
</comment>
<comment type="subcellular location">
    <subcellularLocation>
        <location evidence="5">Cytoplasm</location>
    </subcellularLocation>
</comment>
<comment type="PTM">
    <text evidence="2">Topaquinone (TPQ) is generated by copper-dependent autoxidation of a specific tyrosyl residue.</text>
</comment>
<comment type="similarity">
    <text evidence="7">Belongs to the copper/topaquinone oxidase family.</text>
</comment>
<protein>
    <recommendedName>
        <fullName>Copper amine oxidase-like protein cao2</fullName>
        <ecNumber evidence="2">1.4.3.21</ecNumber>
    </recommendedName>
</protein>
<dbReference type="EC" id="1.4.3.21" evidence="2"/>
<dbReference type="EMBL" id="CU329671">
    <property type="protein sequence ID" value="CAB38696.2"/>
    <property type="molecule type" value="Genomic_DNA"/>
</dbReference>
<dbReference type="PIR" id="T39367">
    <property type="entry name" value="T39367"/>
</dbReference>
<dbReference type="PIR" id="T50376">
    <property type="entry name" value="T39171"/>
</dbReference>
<dbReference type="RefSeq" id="NP_596841.2">
    <property type="nucleotide sequence ID" value="NM_001023862.3"/>
</dbReference>
<dbReference type="SMR" id="O42890"/>
<dbReference type="BioGRID" id="276181">
    <property type="interactions" value="10"/>
</dbReference>
<dbReference type="FunCoup" id="O42890">
    <property type="interactions" value="62"/>
</dbReference>
<dbReference type="STRING" id="284812.O42890"/>
<dbReference type="iPTMnet" id="O42890"/>
<dbReference type="PaxDb" id="4896-SPBC1289.16c.1"/>
<dbReference type="EnsemblFungi" id="SPBC1289.16c.1">
    <property type="protein sequence ID" value="SPBC1289.16c.1:pep"/>
    <property type="gene ID" value="SPBC1289.16c"/>
</dbReference>
<dbReference type="GeneID" id="2539624"/>
<dbReference type="KEGG" id="spo:2539624"/>
<dbReference type="PomBase" id="SPBC1289.16c">
    <property type="gene designation" value="cao2"/>
</dbReference>
<dbReference type="VEuPathDB" id="FungiDB:SPBC1289.16c"/>
<dbReference type="eggNOG" id="KOG1186">
    <property type="taxonomic scope" value="Eukaryota"/>
</dbReference>
<dbReference type="HOGENOM" id="CLU_011500_3_2_1"/>
<dbReference type="InParanoid" id="O42890"/>
<dbReference type="PhylomeDB" id="O42890"/>
<dbReference type="PRO" id="PR:O42890"/>
<dbReference type="Proteomes" id="UP000002485">
    <property type="component" value="Chromosome II"/>
</dbReference>
<dbReference type="GO" id="GO:0005829">
    <property type="term" value="C:cytosol"/>
    <property type="evidence" value="ECO:0007005"/>
    <property type="project" value="PomBase"/>
</dbReference>
<dbReference type="GO" id="GO:0005507">
    <property type="term" value="F:copper ion binding"/>
    <property type="evidence" value="ECO:0000318"/>
    <property type="project" value="GO_Central"/>
</dbReference>
<dbReference type="GO" id="GO:0016641">
    <property type="term" value="F:oxidoreductase activity, acting on the CH-NH2 group of donors, oxygen as acceptor"/>
    <property type="evidence" value="ECO:0007669"/>
    <property type="project" value="UniProtKB-ARBA"/>
</dbReference>
<dbReference type="GO" id="GO:0048038">
    <property type="term" value="F:quinone binding"/>
    <property type="evidence" value="ECO:0000255"/>
    <property type="project" value="PomBase"/>
</dbReference>
<dbReference type="GO" id="GO:0009308">
    <property type="term" value="P:amine metabolic process"/>
    <property type="evidence" value="ECO:0000318"/>
    <property type="project" value="GO_Central"/>
</dbReference>
<dbReference type="GO" id="GO:1990748">
    <property type="term" value="P:cellular detoxification"/>
    <property type="evidence" value="ECO:0000303"/>
    <property type="project" value="PomBase"/>
</dbReference>
<dbReference type="FunFam" id="3.10.450.40:FF:000014">
    <property type="entry name" value="Peroxisomal primary amine oxidase"/>
    <property type="match status" value="1"/>
</dbReference>
<dbReference type="Gene3D" id="3.10.450.40">
    <property type="match status" value="2"/>
</dbReference>
<dbReference type="Gene3D" id="2.70.98.20">
    <property type="entry name" value="Copper amine oxidase, catalytic domain"/>
    <property type="match status" value="1"/>
</dbReference>
<dbReference type="InterPro" id="IPR049947">
    <property type="entry name" value="Cu_Am_Ox_Cu-bd"/>
</dbReference>
<dbReference type="InterPro" id="IPR049948">
    <property type="entry name" value="Cu_Am_ox_TPQ-bd"/>
</dbReference>
<dbReference type="InterPro" id="IPR000269">
    <property type="entry name" value="Cu_amine_oxidase"/>
</dbReference>
<dbReference type="InterPro" id="IPR015798">
    <property type="entry name" value="Cu_amine_oxidase_C"/>
</dbReference>
<dbReference type="InterPro" id="IPR036460">
    <property type="entry name" value="Cu_amine_oxidase_C_sf"/>
</dbReference>
<dbReference type="InterPro" id="IPR016182">
    <property type="entry name" value="Cu_amine_oxidase_N-reg"/>
</dbReference>
<dbReference type="InterPro" id="IPR015800">
    <property type="entry name" value="Cu_amine_oxidase_N2"/>
</dbReference>
<dbReference type="InterPro" id="IPR015802">
    <property type="entry name" value="Cu_amine_oxidase_N3"/>
</dbReference>
<dbReference type="PANTHER" id="PTHR10638">
    <property type="entry name" value="COPPER AMINE OXIDASE"/>
    <property type="match status" value="1"/>
</dbReference>
<dbReference type="PANTHER" id="PTHR10638:SF86">
    <property type="entry name" value="COPPER AMINE OXIDASE 1-RELATED"/>
    <property type="match status" value="1"/>
</dbReference>
<dbReference type="Pfam" id="PF01179">
    <property type="entry name" value="Cu_amine_oxid"/>
    <property type="match status" value="1"/>
</dbReference>
<dbReference type="Pfam" id="PF02727">
    <property type="entry name" value="Cu_amine_oxidN2"/>
    <property type="match status" value="1"/>
</dbReference>
<dbReference type="Pfam" id="PF02728">
    <property type="entry name" value="Cu_amine_oxidN3"/>
    <property type="match status" value="1"/>
</dbReference>
<dbReference type="SUPFAM" id="SSF49998">
    <property type="entry name" value="Amine oxidase catalytic domain"/>
    <property type="match status" value="1"/>
</dbReference>
<dbReference type="SUPFAM" id="SSF54416">
    <property type="entry name" value="Amine oxidase N-terminal region"/>
    <property type="match status" value="2"/>
</dbReference>
<dbReference type="PROSITE" id="PS01164">
    <property type="entry name" value="COPPER_AMINE_OXID_1"/>
    <property type="match status" value="1"/>
</dbReference>
<dbReference type="PROSITE" id="PS01165">
    <property type="entry name" value="COPPER_AMINE_OXID_2"/>
    <property type="match status" value="1"/>
</dbReference>
<evidence type="ECO:0000250" key="1">
    <source>
        <dbReference type="UniProtKB" id="P12807"/>
    </source>
</evidence>
<evidence type="ECO:0000250" key="2">
    <source>
        <dbReference type="UniProtKB" id="P46883"/>
    </source>
</evidence>
<evidence type="ECO:0000250" key="3">
    <source>
        <dbReference type="UniProtKB" id="Q43077"/>
    </source>
</evidence>
<evidence type="ECO:0000256" key="4">
    <source>
        <dbReference type="SAM" id="MobiDB-lite"/>
    </source>
</evidence>
<evidence type="ECO:0000269" key="5">
    <source>
    </source>
</evidence>
<evidence type="ECO:0000269" key="6">
    <source>
    </source>
</evidence>
<evidence type="ECO:0000305" key="7"/>
<reference key="1">
    <citation type="journal article" date="2002" name="Nature">
        <title>The genome sequence of Schizosaccharomyces pombe.</title>
        <authorList>
            <person name="Wood V."/>
            <person name="Gwilliam R."/>
            <person name="Rajandream M.A."/>
            <person name="Lyne M.H."/>
            <person name="Lyne R."/>
            <person name="Stewart A."/>
            <person name="Sgouros J.G."/>
            <person name="Peat N."/>
            <person name="Hayles J."/>
            <person name="Baker S.G."/>
            <person name="Basham D."/>
            <person name="Bowman S."/>
            <person name="Brooks K."/>
            <person name="Brown D."/>
            <person name="Brown S."/>
            <person name="Chillingworth T."/>
            <person name="Churcher C.M."/>
            <person name="Collins M."/>
            <person name="Connor R."/>
            <person name="Cronin A."/>
            <person name="Davis P."/>
            <person name="Feltwell T."/>
            <person name="Fraser A."/>
            <person name="Gentles S."/>
            <person name="Goble A."/>
            <person name="Hamlin N."/>
            <person name="Harris D.E."/>
            <person name="Hidalgo J."/>
            <person name="Hodgson G."/>
            <person name="Holroyd S."/>
            <person name="Hornsby T."/>
            <person name="Howarth S."/>
            <person name="Huckle E.J."/>
            <person name="Hunt S."/>
            <person name="Jagels K."/>
            <person name="James K.D."/>
            <person name="Jones L."/>
            <person name="Jones M."/>
            <person name="Leather S."/>
            <person name="McDonald S."/>
            <person name="McLean J."/>
            <person name="Mooney P."/>
            <person name="Moule S."/>
            <person name="Mungall K.L."/>
            <person name="Murphy L.D."/>
            <person name="Niblett D."/>
            <person name="Odell C."/>
            <person name="Oliver K."/>
            <person name="O'Neil S."/>
            <person name="Pearson D."/>
            <person name="Quail M.A."/>
            <person name="Rabbinowitsch E."/>
            <person name="Rutherford K.M."/>
            <person name="Rutter S."/>
            <person name="Saunders D."/>
            <person name="Seeger K."/>
            <person name="Sharp S."/>
            <person name="Skelton J."/>
            <person name="Simmonds M.N."/>
            <person name="Squares R."/>
            <person name="Squares S."/>
            <person name="Stevens K."/>
            <person name="Taylor K."/>
            <person name="Taylor R.G."/>
            <person name="Tivey A."/>
            <person name="Walsh S.V."/>
            <person name="Warren T."/>
            <person name="Whitehead S."/>
            <person name="Woodward J.R."/>
            <person name="Volckaert G."/>
            <person name="Aert R."/>
            <person name="Robben J."/>
            <person name="Grymonprez B."/>
            <person name="Weltjens I."/>
            <person name="Vanstreels E."/>
            <person name="Rieger M."/>
            <person name="Schaefer M."/>
            <person name="Mueller-Auer S."/>
            <person name="Gabel C."/>
            <person name="Fuchs M."/>
            <person name="Duesterhoeft A."/>
            <person name="Fritzc C."/>
            <person name="Holzer E."/>
            <person name="Moestl D."/>
            <person name="Hilbert H."/>
            <person name="Borzym K."/>
            <person name="Langer I."/>
            <person name="Beck A."/>
            <person name="Lehrach H."/>
            <person name="Reinhardt R."/>
            <person name="Pohl T.M."/>
            <person name="Eger P."/>
            <person name="Zimmermann W."/>
            <person name="Wedler H."/>
            <person name="Wambutt R."/>
            <person name="Purnelle B."/>
            <person name="Goffeau A."/>
            <person name="Cadieu E."/>
            <person name="Dreano S."/>
            <person name="Gloux S."/>
            <person name="Lelaure V."/>
            <person name="Mottier S."/>
            <person name="Galibert F."/>
            <person name="Aves S.J."/>
            <person name="Xiang Z."/>
            <person name="Hunt C."/>
            <person name="Moore K."/>
            <person name="Hurst S.M."/>
            <person name="Lucas M."/>
            <person name="Rochet M."/>
            <person name="Gaillardin C."/>
            <person name="Tallada V.A."/>
            <person name="Garzon A."/>
            <person name="Thode G."/>
            <person name="Daga R.R."/>
            <person name="Cruzado L."/>
            <person name="Jimenez J."/>
            <person name="Sanchez M."/>
            <person name="del Rey F."/>
            <person name="Benito J."/>
            <person name="Dominguez A."/>
            <person name="Revuelta J.L."/>
            <person name="Moreno S."/>
            <person name="Armstrong J."/>
            <person name="Forsburg S.L."/>
            <person name="Cerutti L."/>
            <person name="Lowe T."/>
            <person name="McCombie W.R."/>
            <person name="Paulsen I."/>
            <person name="Potashkin J."/>
            <person name="Shpakovski G.V."/>
            <person name="Ussery D."/>
            <person name="Barrell B.G."/>
            <person name="Nurse P."/>
        </authorList>
    </citation>
    <scope>NUCLEOTIDE SEQUENCE [LARGE SCALE GENOMIC DNA]</scope>
    <source>
        <strain>972 / ATCC 24843</strain>
    </source>
</reference>
<reference key="2">
    <citation type="journal article" date="2006" name="Nat. Biotechnol.">
        <title>ORFeome cloning and global analysis of protein localization in the fission yeast Schizosaccharomyces pombe.</title>
        <authorList>
            <person name="Matsuyama A."/>
            <person name="Arai R."/>
            <person name="Yashiroda Y."/>
            <person name="Shirai A."/>
            <person name="Kamata A."/>
            <person name="Sekido S."/>
            <person name="Kobayashi Y."/>
            <person name="Hashimoto A."/>
            <person name="Hamamoto M."/>
            <person name="Hiraoka Y."/>
            <person name="Horinouchi S."/>
            <person name="Yoshida M."/>
        </authorList>
    </citation>
    <scope>SUBCELLULAR LOCATION [LARGE SCALE ANALYSIS]</scope>
</reference>
<reference key="3">
    <citation type="journal article" date="2008" name="Eukaryot. Cell">
        <title>Copper distributed by Atx1 is available to copper amine oxidase 1 in Schizosaccharomyces pombe.</title>
        <authorList>
            <person name="Peter C."/>
            <person name="Laliberte J."/>
            <person name="Beaudoin J."/>
            <person name="Labbe S."/>
        </authorList>
    </citation>
    <scope>FUNCTION</scope>
</reference>
<keyword id="KW-0186">Copper</keyword>
<keyword id="KW-0963">Cytoplasm</keyword>
<keyword id="KW-0464">Manganese</keyword>
<keyword id="KW-0479">Metal-binding</keyword>
<keyword id="KW-0560">Oxidoreductase</keyword>
<keyword id="KW-1185">Reference proteome</keyword>
<keyword id="KW-0801">TPQ</keyword>
<name>CAO2_SCHPO</name>
<feature type="chain" id="PRO_0000064107" description="Copper amine oxidase-like protein cao2">
    <location>
        <begin position="1"/>
        <end position="794"/>
    </location>
</feature>
<feature type="region of interest" description="Disordered" evidence="4">
    <location>
        <begin position="563"/>
        <end position="584"/>
    </location>
</feature>
<feature type="region of interest" description="Disordered" evidence="4">
    <location>
        <begin position="634"/>
        <end position="748"/>
    </location>
</feature>
<feature type="compositionally biased region" description="Low complexity" evidence="4">
    <location>
        <begin position="637"/>
        <end position="649"/>
    </location>
</feature>
<feature type="compositionally biased region" description="Basic and acidic residues" evidence="4">
    <location>
        <begin position="652"/>
        <end position="714"/>
    </location>
</feature>
<feature type="compositionally biased region" description="Polar residues" evidence="4">
    <location>
        <begin position="716"/>
        <end position="727"/>
    </location>
</feature>
<feature type="active site" description="Proton acceptor" evidence="1">
    <location>
        <position position="309"/>
    </location>
</feature>
<feature type="active site" description="Schiff-base intermediate with substrate; via topaquinone" evidence="1">
    <location>
        <position position="394"/>
    </location>
</feature>
<feature type="binding site" evidence="1">
    <location>
        <begin position="307"/>
        <end position="318"/>
    </location>
    <ligand>
        <name>substrate</name>
    </ligand>
</feature>
<feature type="binding site" evidence="2">
    <location>
        <begin position="391"/>
        <end position="396"/>
    </location>
    <ligand>
        <name>substrate</name>
    </ligand>
</feature>
<feature type="binding site" evidence="1">
    <location>
        <position position="445"/>
    </location>
    <ligand>
        <name>Cu cation</name>
        <dbReference type="ChEBI" id="CHEBI:23378"/>
    </ligand>
</feature>
<feature type="binding site" evidence="1">
    <location>
        <position position="447"/>
    </location>
    <ligand>
        <name>Cu cation</name>
        <dbReference type="ChEBI" id="CHEBI:23378"/>
    </ligand>
</feature>
<feature type="binding site" evidence="3">
    <location>
        <position position="593"/>
    </location>
    <ligand>
        <name>Mn(2+)</name>
        <dbReference type="ChEBI" id="CHEBI:29035"/>
    </ligand>
</feature>
<feature type="binding site" evidence="3">
    <location>
        <position position="594"/>
    </location>
    <ligand>
        <name>Mn(2+)</name>
        <dbReference type="ChEBI" id="CHEBI:29035"/>
    </ligand>
</feature>
<feature type="binding site" evidence="1">
    <location>
        <position position="604"/>
    </location>
    <ligand>
        <name>Cu cation</name>
        <dbReference type="ChEBI" id="CHEBI:23378"/>
    </ligand>
</feature>
<feature type="modified residue" description="2',4',5'-topaquinone" evidence="1">
    <location>
        <position position="394"/>
    </location>
</feature>
<accession>O42890</accession>
<proteinExistence type="inferred from homology"/>
<gene>
    <name type="primary">cao2</name>
    <name type="synonym">spao2</name>
    <name type="ORF">SPBC1289.16c</name>
    <name type="ORF">SPBC8E4.06</name>
</gene>